<dbReference type="EC" id="4.2.3.4" evidence="1"/>
<dbReference type="EMBL" id="AE009948">
    <property type="protein sequence ID" value="AAN00249.1"/>
    <property type="molecule type" value="Genomic_DNA"/>
</dbReference>
<dbReference type="RefSeq" id="NP_688376.1">
    <property type="nucleotide sequence ID" value="NC_004116.1"/>
</dbReference>
<dbReference type="RefSeq" id="WP_001195725.1">
    <property type="nucleotide sequence ID" value="NC_004116.1"/>
</dbReference>
<dbReference type="SMR" id="Q8DYU5"/>
<dbReference type="STRING" id="208435.SAG1378"/>
<dbReference type="KEGG" id="sag:SAG1378"/>
<dbReference type="PATRIC" id="fig|208435.3.peg.1386"/>
<dbReference type="HOGENOM" id="CLU_001201_0_1_9"/>
<dbReference type="OrthoDB" id="9806583at2"/>
<dbReference type="UniPathway" id="UPA00053">
    <property type="reaction ID" value="UER00085"/>
</dbReference>
<dbReference type="Proteomes" id="UP000000821">
    <property type="component" value="Chromosome"/>
</dbReference>
<dbReference type="GO" id="GO:0005737">
    <property type="term" value="C:cytoplasm"/>
    <property type="evidence" value="ECO:0007669"/>
    <property type="project" value="UniProtKB-SubCell"/>
</dbReference>
<dbReference type="GO" id="GO:0003856">
    <property type="term" value="F:3-dehydroquinate synthase activity"/>
    <property type="evidence" value="ECO:0007669"/>
    <property type="project" value="UniProtKB-UniRule"/>
</dbReference>
<dbReference type="GO" id="GO:0046872">
    <property type="term" value="F:metal ion binding"/>
    <property type="evidence" value="ECO:0007669"/>
    <property type="project" value="UniProtKB-KW"/>
</dbReference>
<dbReference type="GO" id="GO:0000166">
    <property type="term" value="F:nucleotide binding"/>
    <property type="evidence" value="ECO:0007669"/>
    <property type="project" value="UniProtKB-KW"/>
</dbReference>
<dbReference type="GO" id="GO:0008652">
    <property type="term" value="P:amino acid biosynthetic process"/>
    <property type="evidence" value="ECO:0007669"/>
    <property type="project" value="UniProtKB-KW"/>
</dbReference>
<dbReference type="GO" id="GO:0009073">
    <property type="term" value="P:aromatic amino acid family biosynthetic process"/>
    <property type="evidence" value="ECO:0007669"/>
    <property type="project" value="UniProtKB-KW"/>
</dbReference>
<dbReference type="GO" id="GO:0009423">
    <property type="term" value="P:chorismate biosynthetic process"/>
    <property type="evidence" value="ECO:0007669"/>
    <property type="project" value="UniProtKB-UniRule"/>
</dbReference>
<dbReference type="CDD" id="cd08195">
    <property type="entry name" value="DHQS"/>
    <property type="match status" value="1"/>
</dbReference>
<dbReference type="FunFam" id="3.40.50.1970:FF:000007">
    <property type="entry name" value="Pentafunctional AROM polypeptide"/>
    <property type="match status" value="1"/>
</dbReference>
<dbReference type="Gene3D" id="3.40.50.1970">
    <property type="match status" value="1"/>
</dbReference>
<dbReference type="Gene3D" id="1.20.1090.10">
    <property type="entry name" value="Dehydroquinate synthase-like - alpha domain"/>
    <property type="match status" value="1"/>
</dbReference>
<dbReference type="HAMAP" id="MF_00110">
    <property type="entry name" value="DHQ_synthase"/>
    <property type="match status" value="1"/>
</dbReference>
<dbReference type="InterPro" id="IPR050071">
    <property type="entry name" value="Dehydroquinate_synthase"/>
</dbReference>
<dbReference type="InterPro" id="IPR016037">
    <property type="entry name" value="DHQ_synth_AroB"/>
</dbReference>
<dbReference type="InterPro" id="IPR030963">
    <property type="entry name" value="DHQ_synth_fam"/>
</dbReference>
<dbReference type="InterPro" id="IPR030960">
    <property type="entry name" value="DHQS/DOIS_N"/>
</dbReference>
<dbReference type="InterPro" id="IPR056179">
    <property type="entry name" value="DHQS_C"/>
</dbReference>
<dbReference type="NCBIfam" id="TIGR01357">
    <property type="entry name" value="aroB"/>
    <property type="match status" value="1"/>
</dbReference>
<dbReference type="PANTHER" id="PTHR43622">
    <property type="entry name" value="3-DEHYDROQUINATE SYNTHASE"/>
    <property type="match status" value="1"/>
</dbReference>
<dbReference type="PANTHER" id="PTHR43622:SF7">
    <property type="entry name" value="3-DEHYDROQUINATE SYNTHASE, CHLOROPLASTIC"/>
    <property type="match status" value="1"/>
</dbReference>
<dbReference type="Pfam" id="PF01761">
    <property type="entry name" value="DHQ_synthase"/>
    <property type="match status" value="1"/>
</dbReference>
<dbReference type="Pfam" id="PF24621">
    <property type="entry name" value="DHQS_C"/>
    <property type="match status" value="1"/>
</dbReference>
<dbReference type="PIRSF" id="PIRSF001455">
    <property type="entry name" value="DHQ_synth"/>
    <property type="match status" value="1"/>
</dbReference>
<dbReference type="SUPFAM" id="SSF56796">
    <property type="entry name" value="Dehydroquinate synthase-like"/>
    <property type="match status" value="1"/>
</dbReference>
<accession>Q8DYU5</accession>
<proteinExistence type="inferred from homology"/>
<name>AROB_STRA5</name>
<reference key="1">
    <citation type="journal article" date="2002" name="Proc. Natl. Acad. Sci. U.S.A.">
        <title>Complete genome sequence and comparative genomic analysis of an emerging human pathogen, serotype V Streptococcus agalactiae.</title>
        <authorList>
            <person name="Tettelin H."/>
            <person name="Masignani V."/>
            <person name="Cieslewicz M.J."/>
            <person name="Eisen J.A."/>
            <person name="Peterson S.N."/>
            <person name="Wessels M.R."/>
            <person name="Paulsen I.T."/>
            <person name="Nelson K.E."/>
            <person name="Margarit I."/>
            <person name="Read T.D."/>
            <person name="Madoff L.C."/>
            <person name="Wolf A.M."/>
            <person name="Beanan M.J."/>
            <person name="Brinkac L.M."/>
            <person name="Daugherty S.C."/>
            <person name="DeBoy R.T."/>
            <person name="Durkin A.S."/>
            <person name="Kolonay J.F."/>
            <person name="Madupu R."/>
            <person name="Lewis M.R."/>
            <person name="Radune D."/>
            <person name="Fedorova N.B."/>
            <person name="Scanlan D."/>
            <person name="Khouri H.M."/>
            <person name="Mulligan S."/>
            <person name="Carty H.A."/>
            <person name="Cline R.T."/>
            <person name="Van Aken S.E."/>
            <person name="Gill J."/>
            <person name="Scarselli M."/>
            <person name="Mora M."/>
            <person name="Iacobini E.T."/>
            <person name="Brettoni C."/>
            <person name="Galli G."/>
            <person name="Mariani M."/>
            <person name="Vegni F."/>
            <person name="Maione D."/>
            <person name="Rinaudo D."/>
            <person name="Rappuoli R."/>
            <person name="Telford J.L."/>
            <person name="Kasper D.L."/>
            <person name="Grandi G."/>
            <person name="Fraser C.M."/>
        </authorList>
    </citation>
    <scope>NUCLEOTIDE SEQUENCE [LARGE SCALE GENOMIC DNA]</scope>
    <source>
        <strain>ATCC BAA-611 / 2603 V/R</strain>
    </source>
</reference>
<protein>
    <recommendedName>
        <fullName evidence="1">3-dehydroquinate synthase</fullName>
        <shortName evidence="1">DHQS</shortName>
        <ecNumber evidence="1">4.2.3.4</ecNumber>
    </recommendedName>
</protein>
<keyword id="KW-0028">Amino-acid biosynthesis</keyword>
<keyword id="KW-0057">Aromatic amino acid biosynthesis</keyword>
<keyword id="KW-0170">Cobalt</keyword>
<keyword id="KW-0963">Cytoplasm</keyword>
<keyword id="KW-0456">Lyase</keyword>
<keyword id="KW-0479">Metal-binding</keyword>
<keyword id="KW-0520">NAD</keyword>
<keyword id="KW-0547">Nucleotide-binding</keyword>
<keyword id="KW-1185">Reference proteome</keyword>
<keyword id="KW-0862">Zinc</keyword>
<comment type="function">
    <text evidence="1">Catalyzes the conversion of 3-deoxy-D-arabino-heptulosonate 7-phosphate (DAHP) to dehydroquinate (DHQ).</text>
</comment>
<comment type="catalytic activity">
    <reaction evidence="1">
        <text>7-phospho-2-dehydro-3-deoxy-D-arabino-heptonate = 3-dehydroquinate + phosphate</text>
        <dbReference type="Rhea" id="RHEA:21968"/>
        <dbReference type="ChEBI" id="CHEBI:32364"/>
        <dbReference type="ChEBI" id="CHEBI:43474"/>
        <dbReference type="ChEBI" id="CHEBI:58394"/>
        <dbReference type="EC" id="4.2.3.4"/>
    </reaction>
</comment>
<comment type="cofactor">
    <cofactor evidence="1">
        <name>NAD(+)</name>
        <dbReference type="ChEBI" id="CHEBI:57540"/>
    </cofactor>
</comment>
<comment type="cofactor">
    <cofactor evidence="1">
        <name>Co(2+)</name>
        <dbReference type="ChEBI" id="CHEBI:48828"/>
    </cofactor>
    <cofactor evidence="1">
        <name>Zn(2+)</name>
        <dbReference type="ChEBI" id="CHEBI:29105"/>
    </cofactor>
    <text evidence="1">Binds 1 divalent metal cation per subunit. Can use either Co(2+) or Zn(2+).</text>
</comment>
<comment type="pathway">
    <text evidence="1">Metabolic intermediate biosynthesis; chorismate biosynthesis; chorismate from D-erythrose 4-phosphate and phosphoenolpyruvate: step 2/7.</text>
</comment>
<comment type="subcellular location">
    <subcellularLocation>
        <location evidence="1">Cytoplasm</location>
    </subcellularLocation>
</comment>
<comment type="similarity">
    <text evidence="1">Belongs to the sugar phosphate cyclases superfamily. Dehydroquinate synthase family.</text>
</comment>
<organism>
    <name type="scientific">Streptococcus agalactiae serotype V (strain ATCC BAA-611 / 2603 V/R)</name>
    <dbReference type="NCBI Taxonomy" id="208435"/>
    <lineage>
        <taxon>Bacteria</taxon>
        <taxon>Bacillati</taxon>
        <taxon>Bacillota</taxon>
        <taxon>Bacilli</taxon>
        <taxon>Lactobacillales</taxon>
        <taxon>Streptococcaceae</taxon>
        <taxon>Streptococcus</taxon>
    </lineage>
</organism>
<evidence type="ECO:0000255" key="1">
    <source>
        <dbReference type="HAMAP-Rule" id="MF_00110"/>
    </source>
</evidence>
<sequence>MQVEVDLPNHPYHIKIEEGCFSEAGDWVSHLWQKQMITIITDSNVEILYGESLVNQLKKQGFTVHVFSFAAGEASKTLEVANRIYAFLAKHHMTRSDGIIALGGGVVGDLAAFVASTYMRGIHFLQIPTSLTAQVDSSIGGKTGVNTSFAKNMVGTFAQPDGVLIDPVTLKTLGNRELVEGMGEVIKYGLIDDIKLWHILEEMDGTIDSILDNALAIIYHSCQVKRKHVLADQYDKGLRMHLNFGHTIGHAIEVHAGYGEIMHGEAVAIGMIQLSRVAERKNLMPRGISQDIYNMCLKFGLPVHYAEWDKDVLFDILSHDKKASGQFIKIVILPQLGSATVHQIPLEEMRDYLEK</sequence>
<gene>
    <name evidence="1" type="primary">aroB</name>
    <name type="ordered locus">SAG1378</name>
</gene>
<feature type="chain" id="PRO_0000140788" description="3-dehydroquinate synthase">
    <location>
        <begin position="1"/>
        <end position="355"/>
    </location>
</feature>
<feature type="binding site" evidence="1">
    <location>
        <begin position="105"/>
        <end position="109"/>
    </location>
    <ligand>
        <name>NAD(+)</name>
        <dbReference type="ChEBI" id="CHEBI:57540"/>
    </ligand>
</feature>
<feature type="binding site" evidence="1">
    <location>
        <begin position="129"/>
        <end position="130"/>
    </location>
    <ligand>
        <name>NAD(+)</name>
        <dbReference type="ChEBI" id="CHEBI:57540"/>
    </ligand>
</feature>
<feature type="binding site" evidence="1">
    <location>
        <position position="142"/>
    </location>
    <ligand>
        <name>NAD(+)</name>
        <dbReference type="ChEBI" id="CHEBI:57540"/>
    </ligand>
</feature>
<feature type="binding site" evidence="1">
    <location>
        <position position="151"/>
    </location>
    <ligand>
        <name>NAD(+)</name>
        <dbReference type="ChEBI" id="CHEBI:57540"/>
    </ligand>
</feature>
<feature type="binding site" evidence="1">
    <location>
        <begin position="169"/>
        <end position="172"/>
    </location>
    <ligand>
        <name>NAD(+)</name>
        <dbReference type="ChEBI" id="CHEBI:57540"/>
    </ligand>
</feature>
<feature type="binding site" evidence="1">
    <location>
        <position position="184"/>
    </location>
    <ligand>
        <name>Zn(2+)</name>
        <dbReference type="ChEBI" id="CHEBI:29105"/>
    </ligand>
</feature>
<feature type="binding site" evidence="1">
    <location>
        <position position="246"/>
    </location>
    <ligand>
        <name>Zn(2+)</name>
        <dbReference type="ChEBI" id="CHEBI:29105"/>
    </ligand>
</feature>
<feature type="binding site" evidence="1">
    <location>
        <position position="263"/>
    </location>
    <ligand>
        <name>Zn(2+)</name>
        <dbReference type="ChEBI" id="CHEBI:29105"/>
    </ligand>
</feature>